<evidence type="ECO:0000250" key="1"/>
<evidence type="ECO:0000250" key="2">
    <source>
        <dbReference type="UniProtKB" id="O35526"/>
    </source>
</evidence>
<evidence type="ECO:0000250" key="3">
    <source>
        <dbReference type="UniProtKB" id="P32851"/>
    </source>
</evidence>
<evidence type="ECO:0000250" key="4">
    <source>
        <dbReference type="UniProtKB" id="Q16623"/>
    </source>
</evidence>
<evidence type="ECO:0000255" key="5"/>
<evidence type="ECO:0000255" key="6">
    <source>
        <dbReference type="PROSITE-ProRule" id="PRU00202"/>
    </source>
</evidence>
<evidence type="ECO:0000305" key="7"/>
<gene>
    <name type="primary">STX1A</name>
</gene>
<dbReference type="EMBL" id="CR861234">
    <property type="protein sequence ID" value="CAH93304.1"/>
    <property type="molecule type" value="mRNA"/>
</dbReference>
<dbReference type="RefSeq" id="NP_001126944.1">
    <property type="nucleotide sequence ID" value="NM_001133472.1"/>
</dbReference>
<dbReference type="BMRB" id="Q5R4L2"/>
<dbReference type="SMR" id="Q5R4L2"/>
<dbReference type="FunCoup" id="Q5R4L2">
    <property type="interactions" value="911"/>
</dbReference>
<dbReference type="STRING" id="9601.ENSPPYP00000019613"/>
<dbReference type="GeneID" id="100173962"/>
<dbReference type="KEGG" id="pon:100173962"/>
<dbReference type="CTD" id="6804"/>
<dbReference type="eggNOG" id="KOG0810">
    <property type="taxonomic scope" value="Eukaryota"/>
</dbReference>
<dbReference type="InParanoid" id="Q5R4L2"/>
<dbReference type="OrthoDB" id="10255013at2759"/>
<dbReference type="Proteomes" id="UP000001595">
    <property type="component" value="Unplaced"/>
</dbReference>
<dbReference type="GO" id="GO:0043005">
    <property type="term" value="C:neuron projection"/>
    <property type="evidence" value="ECO:0007669"/>
    <property type="project" value="UniProtKB-KW"/>
</dbReference>
<dbReference type="GO" id="GO:0005886">
    <property type="term" value="C:plasma membrane"/>
    <property type="evidence" value="ECO:0000250"/>
    <property type="project" value="UniProtKB"/>
</dbReference>
<dbReference type="GO" id="GO:0031201">
    <property type="term" value="C:SNARE complex"/>
    <property type="evidence" value="ECO:0000250"/>
    <property type="project" value="UniProtKB"/>
</dbReference>
<dbReference type="GO" id="GO:0030672">
    <property type="term" value="C:synaptic vesicle membrane"/>
    <property type="evidence" value="ECO:0007669"/>
    <property type="project" value="UniProtKB-SubCell"/>
</dbReference>
<dbReference type="GO" id="GO:0005484">
    <property type="term" value="F:SNAP receptor activity"/>
    <property type="evidence" value="ECO:0007669"/>
    <property type="project" value="InterPro"/>
</dbReference>
<dbReference type="GO" id="GO:0000149">
    <property type="term" value="F:SNARE binding"/>
    <property type="evidence" value="ECO:0007669"/>
    <property type="project" value="TreeGrafter"/>
</dbReference>
<dbReference type="GO" id="GO:0006887">
    <property type="term" value="P:exocytosis"/>
    <property type="evidence" value="ECO:0007669"/>
    <property type="project" value="UniProtKB-KW"/>
</dbReference>
<dbReference type="GO" id="GO:0006886">
    <property type="term" value="P:intracellular protein transport"/>
    <property type="evidence" value="ECO:0007669"/>
    <property type="project" value="InterPro"/>
</dbReference>
<dbReference type="GO" id="GO:0006836">
    <property type="term" value="P:neurotransmitter transport"/>
    <property type="evidence" value="ECO:0007669"/>
    <property type="project" value="UniProtKB-KW"/>
</dbReference>
<dbReference type="GO" id="GO:0045956">
    <property type="term" value="P:positive regulation of calcium ion-dependent exocytosis"/>
    <property type="evidence" value="ECO:0000250"/>
    <property type="project" value="UniProtKB"/>
</dbReference>
<dbReference type="GO" id="GO:0033605">
    <property type="term" value="P:positive regulation of catecholamine secretion"/>
    <property type="evidence" value="ECO:0000250"/>
    <property type="project" value="UniProtKB"/>
</dbReference>
<dbReference type="GO" id="GO:0010701">
    <property type="term" value="P:positive regulation of norepinephrine secretion"/>
    <property type="evidence" value="ECO:0000250"/>
    <property type="project" value="UniProtKB"/>
</dbReference>
<dbReference type="GO" id="GO:0048278">
    <property type="term" value="P:vesicle docking"/>
    <property type="evidence" value="ECO:0007669"/>
    <property type="project" value="TreeGrafter"/>
</dbReference>
<dbReference type="GO" id="GO:0006906">
    <property type="term" value="P:vesicle fusion"/>
    <property type="evidence" value="ECO:0007669"/>
    <property type="project" value="TreeGrafter"/>
</dbReference>
<dbReference type="CDD" id="cd15880">
    <property type="entry name" value="SNARE_syntaxin1"/>
    <property type="match status" value="1"/>
</dbReference>
<dbReference type="CDD" id="cd00179">
    <property type="entry name" value="SynN"/>
    <property type="match status" value="1"/>
</dbReference>
<dbReference type="FunFam" id="1.20.58.70:FF:000042">
    <property type="entry name" value="Syntaxin 11b, tandem duplicate 2"/>
    <property type="match status" value="1"/>
</dbReference>
<dbReference type="FunFam" id="1.20.5.110:FF:000005">
    <property type="entry name" value="Syntaxin 1B"/>
    <property type="match status" value="1"/>
</dbReference>
<dbReference type="Gene3D" id="1.20.5.110">
    <property type="match status" value="1"/>
</dbReference>
<dbReference type="Gene3D" id="1.20.58.70">
    <property type="match status" value="1"/>
</dbReference>
<dbReference type="InterPro" id="IPR010989">
    <property type="entry name" value="SNARE"/>
</dbReference>
<dbReference type="InterPro" id="IPR045242">
    <property type="entry name" value="Syntaxin"/>
</dbReference>
<dbReference type="InterPro" id="IPR006012">
    <property type="entry name" value="Syntaxin/epimorphin_CS"/>
</dbReference>
<dbReference type="InterPro" id="IPR006011">
    <property type="entry name" value="Syntaxin_N"/>
</dbReference>
<dbReference type="InterPro" id="IPR000727">
    <property type="entry name" value="T_SNARE_dom"/>
</dbReference>
<dbReference type="PANTHER" id="PTHR19957">
    <property type="entry name" value="SYNTAXIN"/>
    <property type="match status" value="1"/>
</dbReference>
<dbReference type="PANTHER" id="PTHR19957:SF84">
    <property type="entry name" value="SYNTAXIN-1A"/>
    <property type="match status" value="1"/>
</dbReference>
<dbReference type="Pfam" id="PF05739">
    <property type="entry name" value="SNARE"/>
    <property type="match status" value="1"/>
</dbReference>
<dbReference type="Pfam" id="PF00804">
    <property type="entry name" value="Syntaxin"/>
    <property type="match status" value="1"/>
</dbReference>
<dbReference type="SMART" id="SM00503">
    <property type="entry name" value="SynN"/>
    <property type="match status" value="1"/>
</dbReference>
<dbReference type="SMART" id="SM00397">
    <property type="entry name" value="t_SNARE"/>
    <property type="match status" value="1"/>
</dbReference>
<dbReference type="SUPFAM" id="SSF47661">
    <property type="entry name" value="t-snare proteins"/>
    <property type="match status" value="1"/>
</dbReference>
<dbReference type="PROSITE" id="PS00914">
    <property type="entry name" value="SYNTAXIN"/>
    <property type="match status" value="1"/>
</dbReference>
<dbReference type="PROSITE" id="PS50192">
    <property type="entry name" value="T_SNARE"/>
    <property type="match status" value="1"/>
</dbReference>
<comment type="function">
    <text evidence="2 3">Plays an essential role in hormone and neurotransmitter calcium-dependent exocytosis and endocytosis. Part of the SNARE (Soluble NSF Attachment Receptor) complex composed of SNAP25, STX1A and VAMP2 which mediates the fusion of synaptic vesicles with the presynaptic plasma membrane. STX1A and SNAP25 are localized on the plasma membrane while VAMP2 resides in synaptic vesicles. The pairing of the three SNAREs from the N-terminal SNARE motifs to the C-terminal anchors leads to the formation of the SNARE complex, which brings membranes into close proximity and results in final fusion (By similarity). Participates in the calcium-dependent regulation of acrosomal exocytosis in sperm. Also plays an important role in the exocytosis of hormones such as insulin or glucagon-like peptide 1 (GLP-1) (By similarity).</text>
</comment>
<comment type="subunit">
    <text evidence="2 3 4">Part of the SNARE core complex containing SNAP25, VAMP2 and STX1A; this complex constitutes the basic catalytic machinery of the complex neurotransmitter release apparatus. The SNARE complex interacts with CPLX1. Interacts with STXBP1. The interaction with STXBP1 promotes assembly of the SNARE complex (By similarity). Interacts (via C-terminus) with KCNB1 (via C-terminus); the interaction increases in a calcium-dependent manner and induces a pore-independent enhancement of exocytosis in neuroendocrine cells, chromaffin cells, pancreatic beta cells and from the soma of dorsal root ganglia (DRG) neurons (By similarity). Interacts with SYTL4 (By similarity). Interacts with STXBP6. Interacts with PLCL1 (via C2 domain) (By similarity). Interacts with OTOF. Interacts with LGI3 (By similarity). Interacts (via the H3 domain) with SLC6A4 (via the N-terminus); this interaction regulates SLC4A6 channel conductance in thalamocortical neurons (By similarity). Interacts with SYT6 and SYT8; the interaction is Ca(2+)-dependent (By similarity). Interacts with VAMP8. Interacts with SNAP23 (By similarity). Interacts with VAPA and SYBU (By similarity). Interacts with PRRT2 (By similarity). Interacts with SEPT8 (By similarity). Interacts with STXBP5L (By similarity). Interacts with synaptotagmin-1/SYT1 (By similarity). Interacts with SEPTIN5; in the cerebellar cortex (By similarity). Interacts with SEPTIN4; in the striatum (By similarity).</text>
</comment>
<comment type="subcellular location">
    <subcellularLocation>
        <location evidence="2">Cytoplasmic vesicle</location>
        <location evidence="2">Secretory vesicle</location>
        <location evidence="2">Synaptic vesicle membrane</location>
        <topology evidence="2">Single-pass type IV membrane protein</topology>
    </subcellularLocation>
    <subcellularLocation>
        <location evidence="3">Cell membrane</location>
    </subcellularLocation>
    <subcellularLocation>
        <location evidence="2">Synapse</location>
        <location evidence="2">Synaptosome</location>
    </subcellularLocation>
    <text evidence="3">Colocalizes with KCNB1 at the cell membrane.</text>
</comment>
<comment type="PTM">
    <text evidence="1">Phosphorylated by CK2. Phosphorylation at Ser-188 by DAPK1 significantly decreases its interaction with STXBP1 (By similarity).</text>
</comment>
<comment type="PTM">
    <text evidence="4">Sumoylated, sumoylation is required for regulation of synaptic vesicle endocytosis.</text>
</comment>
<comment type="similarity">
    <text evidence="7">Belongs to the syntaxin family.</text>
</comment>
<organism>
    <name type="scientific">Pongo abelii</name>
    <name type="common">Sumatran orangutan</name>
    <name type="synonym">Pongo pygmaeus abelii</name>
    <dbReference type="NCBI Taxonomy" id="9601"/>
    <lineage>
        <taxon>Eukaryota</taxon>
        <taxon>Metazoa</taxon>
        <taxon>Chordata</taxon>
        <taxon>Craniata</taxon>
        <taxon>Vertebrata</taxon>
        <taxon>Euteleostomi</taxon>
        <taxon>Mammalia</taxon>
        <taxon>Eutheria</taxon>
        <taxon>Euarchontoglires</taxon>
        <taxon>Primates</taxon>
        <taxon>Haplorrhini</taxon>
        <taxon>Catarrhini</taxon>
        <taxon>Hominidae</taxon>
        <taxon>Pongo</taxon>
    </lineage>
</organism>
<keyword id="KW-1003">Cell membrane</keyword>
<keyword id="KW-0175">Coiled coil</keyword>
<keyword id="KW-0968">Cytoplasmic vesicle</keyword>
<keyword id="KW-0268">Exocytosis</keyword>
<keyword id="KW-1017">Isopeptide bond</keyword>
<keyword id="KW-0472">Membrane</keyword>
<keyword id="KW-0532">Neurotransmitter transport</keyword>
<keyword id="KW-0597">Phosphoprotein</keyword>
<keyword id="KW-1185">Reference proteome</keyword>
<keyword id="KW-0770">Synapse</keyword>
<keyword id="KW-0771">Synaptosome</keyword>
<keyword id="KW-0812">Transmembrane</keyword>
<keyword id="KW-1133">Transmembrane helix</keyword>
<keyword id="KW-0813">Transport</keyword>
<keyword id="KW-0832">Ubl conjugation</keyword>
<name>STX1A_PONAB</name>
<reference key="1">
    <citation type="submission" date="2004-11" db="EMBL/GenBank/DDBJ databases">
        <authorList>
            <consortium name="The German cDNA consortium"/>
        </authorList>
    </citation>
    <scope>NUCLEOTIDE SEQUENCE [LARGE SCALE MRNA]</scope>
    <source>
        <tissue>Brain cortex</tissue>
    </source>
</reference>
<sequence>MKDRTQELRTAKDSDDDDDVAVTVDRDRFMDEFFEQVEEIRGFIDKIAENVEEVKRKHSAILASPNPDEKTKEELEELMSDIKKTANKVRSKLKSIEQSIEQEEGLNRSSADLRIRKTQHSTLSRKFVEVMSEYNATQSDYRERCKGRIQRQLEITGRTTTSEELEDMLESGNPAIFASGIIMDSSISKQALSEIETRHSEIIKLENSIRELHDMFMDMAMLVESQGEMIDRIEYNVEHAVDYVERAVSDTKKAVKYQSKARRKKIMIIICCVIPGIVIASTVGGIFA</sequence>
<proteinExistence type="evidence at transcript level"/>
<protein>
    <recommendedName>
        <fullName>Syntaxin-1A</fullName>
    </recommendedName>
</protein>
<feature type="chain" id="PRO_0000210188" description="Syntaxin-1A">
    <location>
        <begin position="1"/>
        <end position="288"/>
    </location>
</feature>
<feature type="topological domain" description="Cytoplasmic" evidence="5">
    <location>
        <begin position="1"/>
        <end position="265"/>
    </location>
</feature>
<feature type="transmembrane region" description="Helical; Anchor for type IV membrane protein" evidence="5">
    <location>
        <begin position="266"/>
        <end position="286"/>
    </location>
</feature>
<feature type="topological domain" description="Extracellular" evidence="5">
    <location>
        <begin position="287"/>
        <end position="288"/>
    </location>
</feature>
<feature type="domain" description="t-SNARE coiled-coil homology" evidence="6">
    <location>
        <begin position="192"/>
        <end position="254"/>
    </location>
</feature>
<feature type="coiled-coil region" evidence="5">
    <location>
        <begin position="68"/>
        <end position="109"/>
    </location>
</feature>
<feature type="modified residue" description="Phosphoserine" evidence="4">
    <location>
        <position position="14"/>
    </location>
</feature>
<feature type="modified residue" description="Phosphoserine" evidence="2">
    <location>
        <position position="64"/>
    </location>
</feature>
<feature type="modified residue" description="Phosphoserine" evidence="3">
    <location>
        <position position="95"/>
    </location>
</feature>
<feature type="modified residue" description="Phosphoserine; by DAPK1" evidence="4">
    <location>
        <position position="188"/>
    </location>
</feature>
<feature type="cross-link" description="Glycyl lysine isopeptide (Lys-Gly) (interchain with G-Cter in SUMO)" evidence="4">
    <location>
        <position position="252"/>
    </location>
</feature>
<feature type="cross-link" description="Glycyl lysine isopeptide (Lys-Gly) (interchain with G-Cter in SUMO)" evidence="4">
    <location>
        <position position="253"/>
    </location>
</feature>
<feature type="cross-link" description="Glycyl lysine isopeptide (Lys-Gly) (interchain with G-Cter in SUMO)" evidence="4">
    <location>
        <position position="256"/>
    </location>
</feature>
<accession>Q5R4L2</accession>